<proteinExistence type="evidence at transcript level"/>
<organism>
    <name type="scientific">Bos taurus</name>
    <name type="common">Bovine</name>
    <dbReference type="NCBI Taxonomy" id="9913"/>
    <lineage>
        <taxon>Eukaryota</taxon>
        <taxon>Metazoa</taxon>
        <taxon>Chordata</taxon>
        <taxon>Craniata</taxon>
        <taxon>Vertebrata</taxon>
        <taxon>Euteleostomi</taxon>
        <taxon>Mammalia</taxon>
        <taxon>Eutheria</taxon>
        <taxon>Laurasiatheria</taxon>
        <taxon>Artiodactyla</taxon>
        <taxon>Ruminantia</taxon>
        <taxon>Pecora</taxon>
        <taxon>Bovidae</taxon>
        <taxon>Bovinae</taxon>
        <taxon>Bos</taxon>
    </lineage>
</organism>
<accession>Q32KM6</accession>
<name>MORN3_BOVIN</name>
<feature type="chain" id="PRO_0000269190" description="MORN repeat-containing protein 3">
    <location>
        <begin position="1"/>
        <end position="241"/>
    </location>
</feature>
<feature type="repeat" description="MORN 1">
    <location>
        <begin position="38"/>
        <end position="60"/>
    </location>
</feature>
<feature type="repeat" description="MORN 2">
    <location>
        <begin position="62"/>
        <end position="84"/>
    </location>
</feature>
<feature type="repeat" description="MORN 3">
    <location>
        <begin position="91"/>
        <end position="113"/>
    </location>
</feature>
<feature type="repeat" description="MORN 4">
    <location>
        <begin position="114"/>
        <end position="136"/>
    </location>
</feature>
<feature type="repeat" description="MORN 5">
    <location>
        <begin position="137"/>
        <end position="159"/>
    </location>
</feature>
<feature type="repeat" description="MORN 6">
    <location>
        <begin position="160"/>
        <end position="182"/>
    </location>
</feature>
<feature type="repeat" description="MORN 7">
    <location>
        <begin position="184"/>
        <end position="205"/>
    </location>
</feature>
<feature type="region of interest" description="Interaction with MDM2" evidence="1">
    <location>
        <begin position="6"/>
        <end position="35"/>
    </location>
</feature>
<feature type="region of interest" description="Interaction with SIRT1" evidence="1">
    <location>
        <begin position="76"/>
        <end position="100"/>
    </location>
</feature>
<feature type="region of interest" description="Interaction with TP53" evidence="1">
    <location>
        <begin position="206"/>
        <end position="240"/>
    </location>
</feature>
<keyword id="KW-0968">Cytoplasmic vesicle</keyword>
<keyword id="KW-1185">Reference proteome</keyword>
<keyword id="KW-0677">Repeat</keyword>
<dbReference type="EMBL" id="BC110021">
    <property type="protein sequence ID" value="AAI10022.1"/>
    <property type="molecule type" value="mRNA"/>
</dbReference>
<dbReference type="RefSeq" id="NP_001035640.1">
    <property type="nucleotide sequence ID" value="NM_001040550.2"/>
</dbReference>
<dbReference type="RefSeq" id="XP_010812255.3">
    <property type="nucleotide sequence ID" value="XM_010813953.4"/>
</dbReference>
<dbReference type="RefSeq" id="XP_015330966.2">
    <property type="nucleotide sequence ID" value="XM_015475480.3"/>
</dbReference>
<dbReference type="RefSeq" id="XP_059732046.1">
    <property type="nucleotide sequence ID" value="XM_059876063.1"/>
</dbReference>
<dbReference type="RefSeq" id="XP_059732047.1">
    <property type="nucleotide sequence ID" value="XM_059876064.1"/>
</dbReference>
<dbReference type="EMDB" id="EMD-50664"/>
<dbReference type="SMR" id="Q32KM6"/>
<dbReference type="FunCoup" id="Q32KM6">
    <property type="interactions" value="44"/>
</dbReference>
<dbReference type="STRING" id="9913.ENSBTAP00000005841"/>
<dbReference type="PaxDb" id="9913-ENSBTAP00000005841"/>
<dbReference type="Ensembl" id="ENSBTAT00000110661.1">
    <property type="protein sequence ID" value="ENSBTAP00000101266.1"/>
    <property type="gene ID" value="ENSBTAG00000004458.5"/>
</dbReference>
<dbReference type="GeneID" id="531482"/>
<dbReference type="KEGG" id="bta:531482"/>
<dbReference type="CTD" id="283385"/>
<dbReference type="VEuPathDB" id="HostDB:ENSBTAG00000004458"/>
<dbReference type="VGNC" id="VGNC:31560">
    <property type="gene designation" value="MORN3"/>
</dbReference>
<dbReference type="eggNOG" id="KOG0231">
    <property type="taxonomic scope" value="Eukaryota"/>
</dbReference>
<dbReference type="GeneTree" id="ENSGT00940000159285"/>
<dbReference type="HOGENOM" id="CLU_032017_3_0_1"/>
<dbReference type="InParanoid" id="Q32KM6"/>
<dbReference type="OMA" id="GHGRFFH"/>
<dbReference type="OrthoDB" id="270720at2759"/>
<dbReference type="TreeFam" id="TF323893"/>
<dbReference type="Proteomes" id="UP000009136">
    <property type="component" value="Chromosome 17"/>
</dbReference>
<dbReference type="Bgee" id="ENSBTAG00000004458">
    <property type="expression patterns" value="Expressed in semen and 60 other cell types or tissues"/>
</dbReference>
<dbReference type="GO" id="GO:0001669">
    <property type="term" value="C:acrosomal vesicle"/>
    <property type="evidence" value="ECO:0007669"/>
    <property type="project" value="UniProtKB-SubCell"/>
</dbReference>
<dbReference type="FunFam" id="2.20.110.10:FF:000026">
    <property type="entry name" value="MORN repeat containing 3"/>
    <property type="match status" value="1"/>
</dbReference>
<dbReference type="Gene3D" id="2.20.110.10">
    <property type="entry name" value="Histone H3 K4-specific methyltransferase SET7/9 N-terminal domain"/>
    <property type="match status" value="3"/>
</dbReference>
<dbReference type="InterPro" id="IPR003409">
    <property type="entry name" value="MORN"/>
</dbReference>
<dbReference type="InterPro" id="IPR052472">
    <property type="entry name" value="MORN3"/>
</dbReference>
<dbReference type="PANTHER" id="PTHR46511">
    <property type="entry name" value="MORN REPEAT-CONTAINING PROTEIN 3"/>
    <property type="match status" value="1"/>
</dbReference>
<dbReference type="PANTHER" id="PTHR46511:SF1">
    <property type="entry name" value="MORN REPEAT-CONTAINING PROTEIN 3"/>
    <property type="match status" value="1"/>
</dbReference>
<dbReference type="Pfam" id="PF02493">
    <property type="entry name" value="MORN"/>
    <property type="match status" value="6"/>
</dbReference>
<dbReference type="SMART" id="SM00698">
    <property type="entry name" value="MORN"/>
    <property type="match status" value="6"/>
</dbReference>
<dbReference type="SUPFAM" id="SSF82185">
    <property type="entry name" value="Histone H3 K4-specific methyltransferase SET7/9 N-terminal domain"/>
    <property type="match status" value="2"/>
</dbReference>
<protein>
    <recommendedName>
        <fullName>MORN repeat-containing protein 3</fullName>
    </recommendedName>
</protein>
<sequence length="241" mass="27829">MPIFKCPQKSEPLWKEWDQKAQKNGLRHQVFAVNGDHYVGEWKDNVKHGKGTQVWKKNGAIYEGDWKSGKRDGYGTLSLPDQETGKYKRAYSGWWKGDKKCGYGIQFFGPKEYYEGDWCGNQRSGWGRMYYSNGDIYEGQWRNDKPEGEGMLRLKNGNRYEGNWQRGVKNGSGRFFHLDHGQLFEGFWVDDVAKCGTMIDFGRDEAPQPTQFPIPEVKILDPDGVLEEALAMFKKTKEEGD</sequence>
<gene>
    <name type="primary">MORN3</name>
</gene>
<comment type="function">
    <text evidence="1 2">Assembles a suppression complex (suppresome) by tethering SIRT1 and MDM2 to regulate composite modifications of p53/TP53. Confers both deacetylation-mediated functional inactivation, by SIRT1, and ubiquitination-dependent degradation, by MDM2, of p53/TP53, promoting a proliferative and cell survival behaviors (By similarity). May play a role in the regulation of spermatogenesis (By similarity).</text>
</comment>
<comment type="subunit">
    <text evidence="1 2">Interacts with MEIG1 (By similarity). Interacts with TP53, MDM2 and SIRT1; the interactions mediate post-transcriptional modifications of TP53 by MDM2 and SIRT1 (By similarity).</text>
</comment>
<comment type="subcellular location">
    <subcellularLocation>
        <location evidence="2">Cytoplasmic vesicle</location>
        <location evidence="2">Secretory vesicle</location>
        <location evidence="2">Acrosome</location>
    </subcellularLocation>
    <text evidence="2">Localized in the acrosome in germ cells throughout spermiogenesis, it is also present in the manchette of elongating spermatids.</text>
</comment>
<evidence type="ECO:0000250" key="1">
    <source>
        <dbReference type="UniProtKB" id="Q6PF18"/>
    </source>
</evidence>
<evidence type="ECO:0000250" key="2">
    <source>
        <dbReference type="UniProtKB" id="Q8C5T4"/>
    </source>
</evidence>
<reference key="1">
    <citation type="submission" date="2005-11" db="EMBL/GenBank/DDBJ databases">
        <authorList>
            <consortium name="NIH - Mammalian Gene Collection (MGC) project"/>
        </authorList>
    </citation>
    <scope>NUCLEOTIDE SEQUENCE [LARGE SCALE MRNA]</scope>
    <source>
        <strain>Crossbred X Angus</strain>
        <tissue>Liver</tissue>
    </source>
</reference>